<sequence>TIINVKCTSPKQCVPACKAAMGTVRAKCINGKCKCYI</sequence>
<organism>
    <name type="scientific">Heteroctenus garridoi</name>
    <name type="common">Cuban scorpion</name>
    <name type="synonym">Rhopalurus garridoi</name>
    <dbReference type="NCBI Taxonomy" id="2203757"/>
    <lineage>
        <taxon>Eukaryota</taxon>
        <taxon>Metazoa</taxon>
        <taxon>Ecdysozoa</taxon>
        <taxon>Arthropoda</taxon>
        <taxon>Chelicerata</taxon>
        <taxon>Arachnida</taxon>
        <taxon>Scorpiones</taxon>
        <taxon>Buthida</taxon>
        <taxon>Buthoidea</taxon>
        <taxon>Buthidae</taxon>
        <taxon>Heteroctenus</taxon>
    </lineage>
</organism>
<comment type="function">
    <text evidence="3">Reversibly blocks hKv1.1/KCNA1 (50% inhibition of current at 1 uM). Seems not to be voltage-dependent.</text>
</comment>
<comment type="subcellular location">
    <subcellularLocation>
        <location evidence="3">Secreted</location>
    </subcellularLocation>
</comment>
<comment type="tissue specificity">
    <text evidence="6">Expressed by the venom gland.</text>
</comment>
<comment type="domain">
    <text evidence="2">Has the structural arrangement of an alpha-helix connected to a beta-sheet by disulfide bonds (CSalpha/beta).</text>
</comment>
<comment type="miscellaneous">
    <text evidence="3">Negative results: does not block hKv1.4/KCNA4, hERG1/KCNH2 and EAG/KCNH1 currents, at 1 uM.</text>
</comment>
<comment type="similarity">
    <text evidence="5">Belongs to the short scorpion toxin superfamily. Potassium channel inhibitor family. Alpha-KTx 02 subfamily.</text>
</comment>
<feature type="chain" id="PRO_0000433139" description="Potassium channel toxin alpha-KTx 2.14" evidence="3">
    <location>
        <begin position="1"/>
        <end position="37"/>
    </location>
</feature>
<feature type="site" description="Basic residue of the functional dyad" evidence="1">
    <location>
        <position position="27"/>
    </location>
</feature>
<feature type="site" description="Aromatic residue of the functional dyad" evidence="1">
    <location>
        <position position="36"/>
    </location>
</feature>
<feature type="disulfide bond" evidence="2">
    <location>
        <begin position="7"/>
        <end position="28"/>
    </location>
</feature>
<feature type="disulfide bond" evidence="2">
    <location>
        <begin position="13"/>
        <end position="33"/>
    </location>
</feature>
<feature type="disulfide bond" evidence="2">
    <location>
        <begin position="17"/>
        <end position="35"/>
    </location>
</feature>
<keyword id="KW-0903">Direct protein sequencing</keyword>
<keyword id="KW-1015">Disulfide bond</keyword>
<keyword id="KW-0872">Ion channel impairing toxin</keyword>
<keyword id="KW-0528">Neurotoxin</keyword>
<keyword id="KW-0632">Potassium channel impairing toxin</keyword>
<keyword id="KW-0964">Secreted</keyword>
<keyword id="KW-0800">Toxin</keyword>
<keyword id="KW-1220">Voltage-gated potassium channel impairing toxin</keyword>
<evidence type="ECO:0000250" key="1"/>
<evidence type="ECO:0000250" key="2">
    <source>
        <dbReference type="UniProtKB" id="P40755"/>
    </source>
</evidence>
<evidence type="ECO:0000269" key="3">
    <source>
    </source>
</evidence>
<evidence type="ECO:0000303" key="4">
    <source>
    </source>
</evidence>
<evidence type="ECO:0000305" key="5"/>
<evidence type="ECO:0000305" key="6">
    <source>
    </source>
</evidence>
<name>KAX2E_HETGR</name>
<dbReference type="SMR" id="P0DL43"/>
<dbReference type="GO" id="GO:0005576">
    <property type="term" value="C:extracellular region"/>
    <property type="evidence" value="ECO:0007669"/>
    <property type="project" value="UniProtKB-SubCell"/>
</dbReference>
<dbReference type="GO" id="GO:0008200">
    <property type="term" value="F:ion channel inhibitor activity"/>
    <property type="evidence" value="ECO:0007669"/>
    <property type="project" value="InterPro"/>
</dbReference>
<dbReference type="GO" id="GO:0015459">
    <property type="term" value="F:potassium channel regulator activity"/>
    <property type="evidence" value="ECO:0007669"/>
    <property type="project" value="UniProtKB-KW"/>
</dbReference>
<dbReference type="GO" id="GO:0090729">
    <property type="term" value="F:toxin activity"/>
    <property type="evidence" value="ECO:0007669"/>
    <property type="project" value="UniProtKB-KW"/>
</dbReference>
<dbReference type="FunFam" id="3.30.30.10:FF:000009">
    <property type="entry name" value="Potassium channel toxin alpha-KTx 4.3"/>
    <property type="match status" value="1"/>
</dbReference>
<dbReference type="Gene3D" id="3.30.30.10">
    <property type="entry name" value="Knottin, scorpion toxin-like"/>
    <property type="match status" value="1"/>
</dbReference>
<dbReference type="InterPro" id="IPR036574">
    <property type="entry name" value="Scorpion_toxin-like_sf"/>
</dbReference>
<dbReference type="InterPro" id="IPR001947">
    <property type="entry name" value="Scorpion_toxinS_K_inh"/>
</dbReference>
<dbReference type="Pfam" id="PF00451">
    <property type="entry name" value="Toxin_2"/>
    <property type="match status" value="1"/>
</dbReference>
<dbReference type="PRINTS" id="PR00286">
    <property type="entry name" value="CHARYBDTOXIN"/>
</dbReference>
<dbReference type="SUPFAM" id="SSF57095">
    <property type="entry name" value="Scorpion toxin-like"/>
    <property type="match status" value="1"/>
</dbReference>
<dbReference type="PROSITE" id="PS01138">
    <property type="entry name" value="SCORP_SHORT_TOXIN"/>
    <property type="match status" value="1"/>
</dbReference>
<reference key="1">
    <citation type="journal article" date="2014" name="Peptides">
        <title>A K+ channel blocking peptide from the Cuban scorpion Rhopalurus garridoi.</title>
        <authorList>
            <person name="Rodriguez-Ravelo R."/>
            <person name="Restano-Cassulini R."/>
            <person name="Zamudio F.Z."/>
            <person name="Coronas F.I."/>
            <person name="Espinosa-Lopez G."/>
            <person name="Possani L.D."/>
        </authorList>
    </citation>
    <scope>PROTEIN SEQUENCE</scope>
    <scope>FUNCTION</scope>
    <scope>SUBCELLULAR LOCATION</scope>
    <scope>ACTIVITY PROFILE</scope>
    <source>
        <tissue>Venom</tissue>
    </source>
</reference>
<accession>P0DL43</accession>
<protein>
    <recommendedName>
        <fullName evidence="4">Potassium channel toxin alpha-KTx 2.14</fullName>
    </recommendedName>
</protein>
<proteinExistence type="evidence at protein level"/>